<comment type="subunit">
    <text evidence="1">Part of the 30S ribosomal subunit.</text>
</comment>
<comment type="subcellular location">
    <subcellularLocation>
        <location>Plastid</location>
    </subcellularLocation>
</comment>
<comment type="similarity">
    <text evidence="2">Belongs to the universal ribosomal protein uS15 family.</text>
</comment>
<reference key="1">
    <citation type="journal article" date="2008" name="Mol. Biol. Evol.">
        <title>Functional gene losses occur with minimal size reduction in the plastid genome of the parasitic liverwort Aneura mirabilis.</title>
        <authorList>
            <person name="Wickett N.J."/>
            <person name="Zhang Y."/>
            <person name="Hansen S.K."/>
            <person name="Roper J.M."/>
            <person name="Kuehl J.V."/>
            <person name="Plock S.A."/>
            <person name="Wolf P.G."/>
            <person name="dePamphilis C.W."/>
            <person name="Boore J.L."/>
            <person name="Goffinet B."/>
        </authorList>
    </citation>
    <scope>NUCLEOTIDE SEQUENCE [LARGE SCALE GENOMIC DNA]</scope>
</reference>
<feature type="chain" id="PRO_0000354235" description="Small ribosomal subunit protein uS15c">
    <location>
        <begin position="1"/>
        <end position="89"/>
    </location>
</feature>
<protein>
    <recommendedName>
        <fullName evidence="2">Small ribosomal subunit protein uS15c</fullName>
    </recommendedName>
    <alternativeName>
        <fullName>30S ribosomal protein S15, plastid</fullName>
    </alternativeName>
</protein>
<evidence type="ECO:0000250" key="1"/>
<evidence type="ECO:0000305" key="2"/>
<gene>
    <name type="primary">rps15</name>
</gene>
<accession>B0YPS2</accession>
<sequence length="89" mass="10690">MHRNDFTCFTQSVYTKKDGSVESQICCLTNRIVKLTRHFQTHRKDYSSQRGLWKILGRRKRLLIYLLQTDAIGYRDLTTQLKIRKLKKK</sequence>
<proteinExistence type="inferred from homology"/>
<dbReference type="EMBL" id="EU043314">
    <property type="protein sequence ID" value="ABS54520.1"/>
    <property type="molecule type" value="Genomic_DNA"/>
</dbReference>
<dbReference type="RefSeq" id="YP_001687258.1">
    <property type="nucleotide sequence ID" value="NC_010359.1"/>
</dbReference>
<dbReference type="SMR" id="B0YPS2"/>
<dbReference type="GeneID" id="5952138"/>
<dbReference type="GO" id="GO:0009536">
    <property type="term" value="C:plastid"/>
    <property type="evidence" value="ECO:0007669"/>
    <property type="project" value="UniProtKB-SubCell"/>
</dbReference>
<dbReference type="GO" id="GO:1990904">
    <property type="term" value="C:ribonucleoprotein complex"/>
    <property type="evidence" value="ECO:0007669"/>
    <property type="project" value="UniProtKB-KW"/>
</dbReference>
<dbReference type="GO" id="GO:0005840">
    <property type="term" value="C:ribosome"/>
    <property type="evidence" value="ECO:0007669"/>
    <property type="project" value="UniProtKB-KW"/>
</dbReference>
<dbReference type="GO" id="GO:0003735">
    <property type="term" value="F:structural constituent of ribosome"/>
    <property type="evidence" value="ECO:0007669"/>
    <property type="project" value="InterPro"/>
</dbReference>
<dbReference type="GO" id="GO:0006412">
    <property type="term" value="P:translation"/>
    <property type="evidence" value="ECO:0007669"/>
    <property type="project" value="InterPro"/>
</dbReference>
<dbReference type="CDD" id="cd00677">
    <property type="entry name" value="S15_NS1_EPRS_RNA-bind"/>
    <property type="match status" value="1"/>
</dbReference>
<dbReference type="Gene3D" id="1.10.287.10">
    <property type="entry name" value="S15/NS1, RNA-binding"/>
    <property type="match status" value="1"/>
</dbReference>
<dbReference type="HAMAP" id="MF_01343_B">
    <property type="entry name" value="Ribosomal_uS15_B"/>
    <property type="match status" value="1"/>
</dbReference>
<dbReference type="InterPro" id="IPR000589">
    <property type="entry name" value="Ribosomal_uS15"/>
</dbReference>
<dbReference type="InterPro" id="IPR005290">
    <property type="entry name" value="Ribosomal_uS15_bac-type"/>
</dbReference>
<dbReference type="InterPro" id="IPR009068">
    <property type="entry name" value="uS15_NS1_RNA-bd_sf"/>
</dbReference>
<dbReference type="NCBIfam" id="TIGR00952">
    <property type="entry name" value="S15_bact"/>
    <property type="match status" value="1"/>
</dbReference>
<dbReference type="PANTHER" id="PTHR23321">
    <property type="entry name" value="RIBOSOMAL PROTEIN S15, BACTERIAL AND ORGANELLAR"/>
    <property type="match status" value="1"/>
</dbReference>
<dbReference type="PANTHER" id="PTHR23321:SF26">
    <property type="entry name" value="SMALL RIBOSOMAL SUBUNIT PROTEIN US15M"/>
    <property type="match status" value="1"/>
</dbReference>
<dbReference type="Pfam" id="PF00312">
    <property type="entry name" value="Ribosomal_S15"/>
    <property type="match status" value="1"/>
</dbReference>
<dbReference type="SMART" id="SM01387">
    <property type="entry name" value="Ribosomal_S15"/>
    <property type="match status" value="1"/>
</dbReference>
<dbReference type="SUPFAM" id="SSF47060">
    <property type="entry name" value="S15/NS1 RNA-binding domain"/>
    <property type="match status" value="1"/>
</dbReference>
<dbReference type="PROSITE" id="PS00362">
    <property type="entry name" value="RIBOSOMAL_S15"/>
    <property type="match status" value="1"/>
</dbReference>
<geneLocation type="non-photosynthetic plastid"/>
<keyword id="KW-0934">Plastid</keyword>
<keyword id="KW-0687">Ribonucleoprotein</keyword>
<keyword id="KW-0689">Ribosomal protein</keyword>
<organism>
    <name type="scientific">Aneura mirabilis</name>
    <name type="common">Parasitic liverwort</name>
    <name type="synonym">Cryptothallus mirabilis</name>
    <dbReference type="NCBI Taxonomy" id="280810"/>
    <lineage>
        <taxon>Eukaryota</taxon>
        <taxon>Viridiplantae</taxon>
        <taxon>Streptophyta</taxon>
        <taxon>Embryophyta</taxon>
        <taxon>Marchantiophyta</taxon>
        <taxon>Jungermanniopsida</taxon>
        <taxon>Metzgeriidae</taxon>
        <taxon>Metzgeriales</taxon>
        <taxon>Aneuraceae</taxon>
        <taxon>Aneura</taxon>
    </lineage>
</organism>
<name>RR15_ANEMR</name>